<reference key="1">
    <citation type="journal article" date="1989" name="Plant Mol. Biol.">
        <title>A cDNA-based comparison of dehydration-induced proteins (dehydrins) in barley and corn.</title>
        <authorList>
            <person name="Close T.J."/>
            <person name="Kortt A.A."/>
            <person name="Chandler P.M."/>
        </authorList>
    </citation>
    <scope>NUCLEOTIDE SEQUENCE [MRNA]</scope>
    <source>
        <strain>cv. Himalaya</strain>
        <tissue>Seedling</tissue>
    </source>
</reference>
<organism>
    <name type="scientific">Hordeum vulgare</name>
    <name type="common">Barley</name>
    <dbReference type="NCBI Taxonomy" id="4513"/>
    <lineage>
        <taxon>Eukaryota</taxon>
        <taxon>Viridiplantae</taxon>
        <taxon>Streptophyta</taxon>
        <taxon>Embryophyta</taxon>
        <taxon>Tracheophyta</taxon>
        <taxon>Spermatophyta</taxon>
        <taxon>Magnoliopsida</taxon>
        <taxon>Liliopsida</taxon>
        <taxon>Poales</taxon>
        <taxon>Poaceae</taxon>
        <taxon>BOP clade</taxon>
        <taxon>Pooideae</taxon>
        <taxon>Triticodae</taxon>
        <taxon>Triticeae</taxon>
        <taxon>Hordeinae</taxon>
        <taxon>Hordeum</taxon>
    </lineage>
</organism>
<keyword id="KW-0346">Stress response</keyword>
<comment type="induction">
    <text>By abscisic acid (ABA) and water stress.</text>
</comment>
<comment type="similarity">
    <text evidence="2">Belongs to the plant dehydrin family.</text>
</comment>
<accession>P12951</accession>
<gene>
    <name type="primary">DHN1</name>
</gene>
<proteinExistence type="evidence at transcript level"/>
<dbReference type="EMBL" id="X15288">
    <property type="protein sequence ID" value="CAA33362.1"/>
    <property type="molecule type" value="mRNA"/>
</dbReference>
<dbReference type="PIR" id="S05544">
    <property type="entry name" value="S05544"/>
</dbReference>
<dbReference type="SMR" id="P12951"/>
<dbReference type="OMA" id="MSDMRDE"/>
<dbReference type="ExpressionAtlas" id="P12951">
    <property type="expression patterns" value="baseline"/>
</dbReference>
<dbReference type="GO" id="GO:0005829">
    <property type="term" value="C:cytosol"/>
    <property type="evidence" value="ECO:0007669"/>
    <property type="project" value="TreeGrafter"/>
</dbReference>
<dbReference type="GO" id="GO:0009631">
    <property type="term" value="P:cold acclimation"/>
    <property type="evidence" value="ECO:0007669"/>
    <property type="project" value="TreeGrafter"/>
</dbReference>
<dbReference type="GO" id="GO:0009737">
    <property type="term" value="P:response to abscisic acid"/>
    <property type="evidence" value="ECO:0007669"/>
    <property type="project" value="TreeGrafter"/>
</dbReference>
<dbReference type="GO" id="GO:0009414">
    <property type="term" value="P:response to water deprivation"/>
    <property type="evidence" value="ECO:0007669"/>
    <property type="project" value="TreeGrafter"/>
</dbReference>
<dbReference type="InterPro" id="IPR000167">
    <property type="entry name" value="Dehydrin"/>
</dbReference>
<dbReference type="InterPro" id="IPR030513">
    <property type="entry name" value="Dehydrin_CS"/>
</dbReference>
<dbReference type="PANTHER" id="PTHR33346:SF54">
    <property type="entry name" value="DEHYDRIN"/>
    <property type="match status" value="1"/>
</dbReference>
<dbReference type="PANTHER" id="PTHR33346">
    <property type="entry name" value="DEHYDRIN XERO 2-RELATED"/>
    <property type="match status" value="1"/>
</dbReference>
<dbReference type="Pfam" id="PF00257">
    <property type="entry name" value="Dehydrin"/>
    <property type="match status" value="1"/>
</dbReference>
<dbReference type="PROSITE" id="PS00315">
    <property type="entry name" value="DEHYDRIN_1"/>
    <property type="match status" value="1"/>
</dbReference>
<dbReference type="PROSITE" id="PS00823">
    <property type="entry name" value="DEHYDRIN_2"/>
    <property type="match status" value="2"/>
</dbReference>
<evidence type="ECO:0000256" key="1">
    <source>
        <dbReference type="SAM" id="MobiDB-lite"/>
    </source>
</evidence>
<evidence type="ECO:0000305" key="2"/>
<protein>
    <recommendedName>
        <fullName>Dehydrin DHN1</fullName>
    </recommendedName>
    <alternativeName>
        <fullName>B8</fullName>
    </alternativeName>
</protein>
<sequence>MEYQGQHGHATDKVEEYGQPVAGHGGFTGGPTGTHGAAGVGGAQLQATRDGHKTDGVLRRSGSSSSSSSEDDGVGGRRKKGMKEKIKEKLPGGAHKDAAGQQQQTAMAGEYAGTHGTEATGEKKGVMDKIKEKLPGGQH</sequence>
<name>DHN1_HORVU</name>
<feature type="chain" id="PRO_0000100046" description="Dehydrin DHN1">
    <location>
        <begin position="1"/>
        <end position="139"/>
    </location>
</feature>
<feature type="region of interest" description="Disordered" evidence="1">
    <location>
        <begin position="1"/>
        <end position="139"/>
    </location>
</feature>
<feature type="compositionally biased region" description="Gly residues" evidence="1">
    <location>
        <begin position="23"/>
        <end position="42"/>
    </location>
</feature>
<feature type="compositionally biased region" description="Basic and acidic residues" evidence="1">
    <location>
        <begin position="49"/>
        <end position="58"/>
    </location>
</feature>
<feature type="compositionally biased region" description="Low complexity" evidence="1">
    <location>
        <begin position="59"/>
        <end position="68"/>
    </location>
</feature>
<feature type="compositionally biased region" description="Basic and acidic residues" evidence="1">
    <location>
        <begin position="83"/>
        <end position="98"/>
    </location>
</feature>
<feature type="compositionally biased region" description="Low complexity" evidence="1">
    <location>
        <begin position="99"/>
        <end position="109"/>
    </location>
</feature>
<feature type="compositionally biased region" description="Basic and acidic residues" evidence="1">
    <location>
        <begin position="120"/>
        <end position="139"/>
    </location>
</feature>